<keyword id="KW-0067">ATP-binding</keyword>
<keyword id="KW-0963">Cytoplasm</keyword>
<keyword id="KW-0235">DNA replication</keyword>
<keyword id="KW-0238">DNA-binding</keyword>
<keyword id="KW-0446">Lipid-binding</keyword>
<keyword id="KW-0547">Nucleotide-binding</keyword>
<organism>
    <name type="scientific">Dechloromonas aromatica (strain RCB)</name>
    <dbReference type="NCBI Taxonomy" id="159087"/>
    <lineage>
        <taxon>Bacteria</taxon>
        <taxon>Pseudomonadati</taxon>
        <taxon>Pseudomonadota</taxon>
        <taxon>Betaproteobacteria</taxon>
        <taxon>Rhodocyclales</taxon>
        <taxon>Azonexaceae</taxon>
        <taxon>Dechloromonas</taxon>
    </lineage>
</organism>
<sequence length="465" mass="52295">MSGFWESCLQRFEQELPAQQFNTWIKPLRLEGESTALEDGLRLIAPNGFILKWVRDRYLTRIEDYSRTFFEGPVTIALVIGSGKATAARIQATTTDSGQNAPANPATTSEKRTAASEKARGKGSNYEKSRLFPSFTFDNLVVGKANDLARAAAVQVANNPGGAYNPLFIYGGAGLGKTHLIHAIGNTIATENPEKIVRYVHAEDYYSDVVRAYQQKSFDSFKRTYRSLDVLLLDDVQFFNGKNRSQEEFFFLFNALIEARKQIIITCDTYPKDINGLDDRLVTRFDWGLTVQIEPPELEMRVAILKKKAEAEGIQLDDEVAFFIAKHLRSNVRELEGALKKVLAYSSFHGRVIALDLAKEALKDVIGSVRNVGMDNIQKTVADYYKIKVAELFSKKRTRAIARPRQVAMWLCREVTSHSFPEIGDAFGGRDHTTVIHAVKTIDSLRIKENELNHDLHVLLQVLKG</sequence>
<name>DNAA_DECAR</name>
<reference key="1">
    <citation type="journal article" date="2009" name="BMC Genomics">
        <title>Metabolic analysis of the soil microbe Dechloromonas aromatica str. RCB: indications of a surprisingly complex life-style and cryptic anaerobic pathways for aromatic degradation.</title>
        <authorList>
            <person name="Salinero K.K."/>
            <person name="Keller K."/>
            <person name="Feil W.S."/>
            <person name="Feil H."/>
            <person name="Trong S."/>
            <person name="Di Bartolo G."/>
            <person name="Lapidus A."/>
        </authorList>
    </citation>
    <scope>NUCLEOTIDE SEQUENCE [LARGE SCALE GENOMIC DNA]</scope>
    <source>
        <strain>RCB</strain>
    </source>
</reference>
<evidence type="ECO:0000255" key="1">
    <source>
        <dbReference type="HAMAP-Rule" id="MF_00377"/>
    </source>
</evidence>
<evidence type="ECO:0000256" key="2">
    <source>
        <dbReference type="SAM" id="MobiDB-lite"/>
    </source>
</evidence>
<protein>
    <recommendedName>
        <fullName evidence="1">Chromosomal replication initiator protein DnaA</fullName>
    </recommendedName>
</protein>
<accession>Q47K71</accession>
<dbReference type="EMBL" id="CP000089">
    <property type="protein sequence ID" value="AAZ44760.1"/>
    <property type="molecule type" value="Genomic_DNA"/>
</dbReference>
<dbReference type="SMR" id="Q47K71"/>
<dbReference type="STRING" id="159087.Daro_0001"/>
<dbReference type="KEGG" id="dar:Daro_0001"/>
<dbReference type="eggNOG" id="COG0593">
    <property type="taxonomic scope" value="Bacteria"/>
</dbReference>
<dbReference type="HOGENOM" id="CLU_026910_0_1_4"/>
<dbReference type="OrthoDB" id="9807019at2"/>
<dbReference type="GO" id="GO:0005737">
    <property type="term" value="C:cytoplasm"/>
    <property type="evidence" value="ECO:0007669"/>
    <property type="project" value="UniProtKB-SubCell"/>
</dbReference>
<dbReference type="GO" id="GO:0005886">
    <property type="term" value="C:plasma membrane"/>
    <property type="evidence" value="ECO:0007669"/>
    <property type="project" value="TreeGrafter"/>
</dbReference>
<dbReference type="GO" id="GO:0005524">
    <property type="term" value="F:ATP binding"/>
    <property type="evidence" value="ECO:0007669"/>
    <property type="project" value="UniProtKB-UniRule"/>
</dbReference>
<dbReference type="GO" id="GO:0016887">
    <property type="term" value="F:ATP hydrolysis activity"/>
    <property type="evidence" value="ECO:0007669"/>
    <property type="project" value="InterPro"/>
</dbReference>
<dbReference type="GO" id="GO:0003688">
    <property type="term" value="F:DNA replication origin binding"/>
    <property type="evidence" value="ECO:0007669"/>
    <property type="project" value="UniProtKB-UniRule"/>
</dbReference>
<dbReference type="GO" id="GO:0008289">
    <property type="term" value="F:lipid binding"/>
    <property type="evidence" value="ECO:0007669"/>
    <property type="project" value="UniProtKB-KW"/>
</dbReference>
<dbReference type="GO" id="GO:0006270">
    <property type="term" value="P:DNA replication initiation"/>
    <property type="evidence" value="ECO:0007669"/>
    <property type="project" value="UniProtKB-UniRule"/>
</dbReference>
<dbReference type="GO" id="GO:0006275">
    <property type="term" value="P:regulation of DNA replication"/>
    <property type="evidence" value="ECO:0007669"/>
    <property type="project" value="UniProtKB-UniRule"/>
</dbReference>
<dbReference type="CDD" id="cd00009">
    <property type="entry name" value="AAA"/>
    <property type="match status" value="1"/>
</dbReference>
<dbReference type="CDD" id="cd06571">
    <property type="entry name" value="Bac_DnaA_C"/>
    <property type="match status" value="1"/>
</dbReference>
<dbReference type="FunFam" id="1.10.8.60:FF:000003">
    <property type="entry name" value="Chromosomal replication initiator protein DnaA"/>
    <property type="match status" value="1"/>
</dbReference>
<dbReference type="FunFam" id="3.40.50.300:FF:000668">
    <property type="entry name" value="Chromosomal replication initiator protein DnaA"/>
    <property type="match status" value="1"/>
</dbReference>
<dbReference type="Gene3D" id="1.10.1750.10">
    <property type="match status" value="1"/>
</dbReference>
<dbReference type="Gene3D" id="1.10.8.60">
    <property type="match status" value="1"/>
</dbReference>
<dbReference type="Gene3D" id="3.30.300.180">
    <property type="match status" value="1"/>
</dbReference>
<dbReference type="Gene3D" id="3.40.50.300">
    <property type="entry name" value="P-loop containing nucleotide triphosphate hydrolases"/>
    <property type="match status" value="1"/>
</dbReference>
<dbReference type="HAMAP" id="MF_00377">
    <property type="entry name" value="DnaA_bact"/>
    <property type="match status" value="1"/>
</dbReference>
<dbReference type="InterPro" id="IPR003593">
    <property type="entry name" value="AAA+_ATPase"/>
</dbReference>
<dbReference type="InterPro" id="IPR001957">
    <property type="entry name" value="Chromosome_initiator_DnaA"/>
</dbReference>
<dbReference type="InterPro" id="IPR020591">
    <property type="entry name" value="Chromosome_initiator_DnaA-like"/>
</dbReference>
<dbReference type="InterPro" id="IPR018312">
    <property type="entry name" value="Chromosome_initiator_DnaA_CS"/>
</dbReference>
<dbReference type="InterPro" id="IPR013159">
    <property type="entry name" value="DnaA_C"/>
</dbReference>
<dbReference type="InterPro" id="IPR013317">
    <property type="entry name" value="DnaA_dom"/>
</dbReference>
<dbReference type="InterPro" id="IPR024633">
    <property type="entry name" value="DnaA_N_dom"/>
</dbReference>
<dbReference type="InterPro" id="IPR038454">
    <property type="entry name" value="DnaA_N_sf"/>
</dbReference>
<dbReference type="InterPro" id="IPR027417">
    <property type="entry name" value="P-loop_NTPase"/>
</dbReference>
<dbReference type="InterPro" id="IPR010921">
    <property type="entry name" value="Trp_repressor/repl_initiator"/>
</dbReference>
<dbReference type="NCBIfam" id="TIGR00362">
    <property type="entry name" value="DnaA"/>
    <property type="match status" value="1"/>
</dbReference>
<dbReference type="PANTHER" id="PTHR30050">
    <property type="entry name" value="CHROMOSOMAL REPLICATION INITIATOR PROTEIN DNAA"/>
    <property type="match status" value="1"/>
</dbReference>
<dbReference type="PANTHER" id="PTHR30050:SF2">
    <property type="entry name" value="CHROMOSOMAL REPLICATION INITIATOR PROTEIN DNAA"/>
    <property type="match status" value="1"/>
</dbReference>
<dbReference type="Pfam" id="PF00308">
    <property type="entry name" value="Bac_DnaA"/>
    <property type="match status" value="1"/>
</dbReference>
<dbReference type="Pfam" id="PF08299">
    <property type="entry name" value="Bac_DnaA_C"/>
    <property type="match status" value="1"/>
</dbReference>
<dbReference type="Pfam" id="PF11638">
    <property type="entry name" value="DnaA_N"/>
    <property type="match status" value="1"/>
</dbReference>
<dbReference type="PRINTS" id="PR00051">
    <property type="entry name" value="DNAA"/>
</dbReference>
<dbReference type="SMART" id="SM00382">
    <property type="entry name" value="AAA"/>
    <property type="match status" value="1"/>
</dbReference>
<dbReference type="SMART" id="SM00760">
    <property type="entry name" value="Bac_DnaA_C"/>
    <property type="match status" value="1"/>
</dbReference>
<dbReference type="SUPFAM" id="SSF52540">
    <property type="entry name" value="P-loop containing nucleoside triphosphate hydrolases"/>
    <property type="match status" value="1"/>
</dbReference>
<dbReference type="SUPFAM" id="SSF48295">
    <property type="entry name" value="TrpR-like"/>
    <property type="match status" value="1"/>
</dbReference>
<dbReference type="PROSITE" id="PS01008">
    <property type="entry name" value="DNAA"/>
    <property type="match status" value="1"/>
</dbReference>
<feature type="chain" id="PRO_1000060011" description="Chromosomal replication initiator protein DnaA">
    <location>
        <begin position="1"/>
        <end position="465"/>
    </location>
</feature>
<feature type="region of interest" description="Domain I, interacts with DnaA modulators" evidence="1">
    <location>
        <begin position="1"/>
        <end position="85"/>
    </location>
</feature>
<feature type="region of interest" description="Domain II" evidence="1">
    <location>
        <begin position="85"/>
        <end position="129"/>
    </location>
</feature>
<feature type="region of interest" description="Disordered" evidence="2">
    <location>
        <begin position="93"/>
        <end position="125"/>
    </location>
</feature>
<feature type="region of interest" description="Domain III, AAA+ region" evidence="1">
    <location>
        <begin position="130"/>
        <end position="346"/>
    </location>
</feature>
<feature type="region of interest" description="Domain IV, binds dsDNA" evidence="1">
    <location>
        <begin position="347"/>
        <end position="465"/>
    </location>
</feature>
<feature type="compositionally biased region" description="Polar residues" evidence="2">
    <location>
        <begin position="93"/>
        <end position="108"/>
    </location>
</feature>
<feature type="compositionally biased region" description="Basic and acidic residues" evidence="2">
    <location>
        <begin position="109"/>
        <end position="125"/>
    </location>
</feature>
<feature type="binding site" evidence="1">
    <location>
        <position position="174"/>
    </location>
    <ligand>
        <name>ATP</name>
        <dbReference type="ChEBI" id="CHEBI:30616"/>
    </ligand>
</feature>
<feature type="binding site" evidence="1">
    <location>
        <position position="176"/>
    </location>
    <ligand>
        <name>ATP</name>
        <dbReference type="ChEBI" id="CHEBI:30616"/>
    </ligand>
</feature>
<feature type="binding site" evidence="1">
    <location>
        <position position="177"/>
    </location>
    <ligand>
        <name>ATP</name>
        <dbReference type="ChEBI" id="CHEBI:30616"/>
    </ligand>
</feature>
<feature type="binding site" evidence="1">
    <location>
        <position position="178"/>
    </location>
    <ligand>
        <name>ATP</name>
        <dbReference type="ChEBI" id="CHEBI:30616"/>
    </ligand>
</feature>
<comment type="function">
    <text evidence="1">Plays an essential role in the initiation and regulation of chromosomal replication. ATP-DnaA binds to the origin of replication (oriC) to initiate formation of the DNA replication initiation complex once per cell cycle. Binds the DnaA box (a 9 base pair repeat at the origin) and separates the double-stranded (ds)DNA. Forms a right-handed helical filament on oriC DNA; dsDNA binds to the exterior of the filament while single-stranded (ss)DNA is stabiized in the filament's interior. The ATP-DnaA-oriC complex binds and stabilizes one strand of the AT-rich DNA unwinding element (DUE), permitting loading of DNA polymerase. After initiation quickly degrades to an ADP-DnaA complex that is not apt for DNA replication. Binds acidic phospholipids.</text>
</comment>
<comment type="subunit">
    <text evidence="1">Oligomerizes as a right-handed, spiral filament on DNA at oriC.</text>
</comment>
<comment type="subcellular location">
    <subcellularLocation>
        <location evidence="1">Cytoplasm</location>
    </subcellularLocation>
</comment>
<comment type="domain">
    <text evidence="1">Domain I is involved in oligomerization and binding regulators, domain II is flexibile and of varying length in different bacteria, domain III forms the AAA+ region, while domain IV binds dsDNA.</text>
</comment>
<comment type="similarity">
    <text evidence="1">Belongs to the DnaA family.</text>
</comment>
<proteinExistence type="inferred from homology"/>
<gene>
    <name evidence="1" type="primary">dnaA</name>
    <name type="ordered locus">Daro_0001</name>
</gene>